<keyword id="KW-0002">3D-structure</keyword>
<keyword id="KW-0145">Chemotaxis</keyword>
<keyword id="KW-0221">Differentiation</keyword>
<keyword id="KW-0903">Direct protein sequencing</keyword>
<keyword id="KW-1015">Disulfide bond</keyword>
<keyword id="KW-0395">Inflammatory response</keyword>
<keyword id="KW-1267">Proteomics identification</keyword>
<keyword id="KW-1185">Reference proteome</keyword>
<keyword id="KW-0964">Secreted</keyword>
<keyword id="KW-0732">Signal</keyword>
<evidence type="ECO:0000250" key="1"/>
<evidence type="ECO:0000250" key="2">
    <source>
        <dbReference type="UniProtKB" id="Q9DD06"/>
    </source>
</evidence>
<evidence type="ECO:0000255" key="3"/>
<evidence type="ECO:0000269" key="4">
    <source>
    </source>
</evidence>
<evidence type="ECO:0000269" key="5">
    <source>
    </source>
</evidence>
<evidence type="ECO:0000269" key="6">
    <source>
    </source>
</evidence>
<evidence type="ECO:0000269" key="7">
    <source>
    </source>
</evidence>
<evidence type="ECO:0000269" key="8">
    <source>
    </source>
</evidence>
<evidence type="ECO:0000269" key="9">
    <source>
    </source>
</evidence>
<evidence type="ECO:0000269" key="10">
    <source>
    </source>
</evidence>
<evidence type="ECO:0000269" key="11">
    <source>
    </source>
</evidence>
<evidence type="ECO:0000269" key="12">
    <source>
    </source>
</evidence>
<evidence type="ECO:0000269" key="13">
    <source>
    </source>
</evidence>
<evidence type="ECO:0007829" key="14">
    <source>
        <dbReference type="PDB" id="7YKD"/>
    </source>
</evidence>
<evidence type="ECO:0007829" key="15">
    <source>
        <dbReference type="PDB" id="8XGM"/>
    </source>
</evidence>
<gene>
    <name type="primary">RARRES2</name>
    <name type="synonym">TIG2</name>
</gene>
<feature type="signal peptide" evidence="4">
    <location>
        <begin position="1"/>
        <end position="20"/>
    </location>
</feature>
<feature type="chain" id="PRO_0000022529" description="Retinoic acid receptor responder protein 2">
    <location>
        <begin position="21"/>
        <end position="157"/>
    </location>
</feature>
<feature type="propeptide" id="PRO_0000424870">
    <location>
        <begin position="158"/>
        <end position="163"/>
    </location>
</feature>
<feature type="disulfide bond" evidence="1">
    <location>
        <begin position="77"/>
        <end position="87"/>
    </location>
</feature>
<feature type="disulfide bond" evidence="1">
    <location>
        <begin position="98"/>
        <end position="117"/>
    </location>
</feature>
<feature type="disulfide bond" evidence="3">
    <location>
        <begin position="101"/>
        <end position="135"/>
    </location>
</feature>
<feature type="helix" evidence="15">
    <location>
        <begin position="25"/>
        <end position="38"/>
    </location>
</feature>
<feature type="strand" evidence="15">
    <location>
        <begin position="47"/>
        <end position="60"/>
    </location>
</feature>
<feature type="strand" evidence="15">
    <location>
        <begin position="63"/>
        <end position="77"/>
    </location>
</feature>
<feature type="strand" evidence="15">
    <location>
        <begin position="95"/>
        <end position="104"/>
    </location>
</feature>
<feature type="helix" evidence="15">
    <location>
        <begin position="106"/>
        <end position="108"/>
    </location>
</feature>
<feature type="strand" evidence="15">
    <location>
        <begin position="110"/>
        <end position="116"/>
    </location>
</feature>
<feature type="helix" evidence="15">
    <location>
        <begin position="126"/>
        <end position="139"/>
    </location>
</feature>
<feature type="turn" evidence="15">
    <location>
        <begin position="145"/>
        <end position="148"/>
    </location>
</feature>
<feature type="turn" evidence="14">
    <location>
        <begin position="151"/>
        <end position="154"/>
    </location>
</feature>
<dbReference type="EMBL" id="U77594">
    <property type="protein sequence ID" value="AAB47975.1"/>
    <property type="molecule type" value="mRNA"/>
</dbReference>
<dbReference type="EMBL" id="AB015632">
    <property type="protein sequence ID" value="BAA76499.1"/>
    <property type="molecule type" value="mRNA"/>
</dbReference>
<dbReference type="EMBL" id="AK312197">
    <property type="protein sequence ID" value="BAG35130.1"/>
    <property type="molecule type" value="mRNA"/>
</dbReference>
<dbReference type="EMBL" id="CR541992">
    <property type="protein sequence ID" value="CAG46789.1"/>
    <property type="molecule type" value="mRNA"/>
</dbReference>
<dbReference type="EMBL" id="CR542026">
    <property type="protein sequence ID" value="CAG46823.1"/>
    <property type="molecule type" value="mRNA"/>
</dbReference>
<dbReference type="EMBL" id="AC005586">
    <property type="protein sequence ID" value="AAS00384.1"/>
    <property type="molecule type" value="Genomic_DNA"/>
</dbReference>
<dbReference type="EMBL" id="CH471173">
    <property type="protein sequence ID" value="EAW54120.1"/>
    <property type="molecule type" value="Genomic_DNA"/>
</dbReference>
<dbReference type="EMBL" id="CH471173">
    <property type="protein sequence ID" value="EAW54121.1"/>
    <property type="molecule type" value="Genomic_DNA"/>
</dbReference>
<dbReference type="EMBL" id="BC000069">
    <property type="protein sequence ID" value="AAH00069.1"/>
    <property type="molecule type" value="mRNA"/>
</dbReference>
<dbReference type="CCDS" id="CCDS5902.1"/>
<dbReference type="RefSeq" id="NP_002880.1">
    <property type="nucleotide sequence ID" value="NM_002889.4"/>
</dbReference>
<dbReference type="PDB" id="7YKD">
    <property type="method" value="EM"/>
    <property type="resolution" value="2.81 A"/>
    <property type="chains" value="L=149-157"/>
</dbReference>
<dbReference type="PDB" id="8JJP">
    <property type="method" value="EM"/>
    <property type="resolution" value="2.90 A"/>
    <property type="chains" value="L=149-157"/>
</dbReference>
<dbReference type="PDB" id="8SG1">
    <property type="method" value="EM"/>
    <property type="resolution" value="2.94 A"/>
    <property type="chains" value="L=149-157"/>
</dbReference>
<dbReference type="PDB" id="8XGM">
    <property type="method" value="EM"/>
    <property type="resolution" value="3.29 A"/>
    <property type="chains" value="D=21-157"/>
</dbReference>
<dbReference type="PDB" id="8ZJG">
    <property type="method" value="EM"/>
    <property type="resolution" value="3.18 A"/>
    <property type="chains" value="L=21-157"/>
</dbReference>
<dbReference type="PDB" id="9L3W">
    <property type="method" value="EM"/>
    <property type="resolution" value="3.50 A"/>
    <property type="chains" value="L=21-157"/>
</dbReference>
<dbReference type="PDB" id="9L3Y">
    <property type="method" value="EM"/>
    <property type="resolution" value="3.60 A"/>
    <property type="chains" value="L=21-157"/>
</dbReference>
<dbReference type="PDBsum" id="7YKD"/>
<dbReference type="PDBsum" id="8JJP"/>
<dbReference type="PDBsum" id="8SG1"/>
<dbReference type="PDBsum" id="8XGM"/>
<dbReference type="PDBsum" id="8ZJG"/>
<dbReference type="PDBsum" id="9L3W"/>
<dbReference type="PDBsum" id="9L3Y"/>
<dbReference type="BMRB" id="Q99969"/>
<dbReference type="EMDB" id="EMD-33891"/>
<dbReference type="EMDB" id="EMD-36364"/>
<dbReference type="EMDB" id="EMD-38328"/>
<dbReference type="EMDB" id="EMD-60144"/>
<dbReference type="EMDB" id="EMD-62793"/>
<dbReference type="EMDB" id="EMD-62798"/>
<dbReference type="SMR" id="Q99969"/>
<dbReference type="BioGRID" id="111854">
    <property type="interactions" value="4"/>
</dbReference>
<dbReference type="FunCoup" id="Q99969">
    <property type="interactions" value="73"/>
</dbReference>
<dbReference type="IntAct" id="Q99969">
    <property type="interactions" value="4"/>
</dbReference>
<dbReference type="STRING" id="9606.ENSP00000418009"/>
<dbReference type="GlyGen" id="Q99969">
    <property type="glycosylation" value="2 sites, 1 O-linked glycan (2 sites)"/>
</dbReference>
<dbReference type="iPTMnet" id="Q99969"/>
<dbReference type="PhosphoSitePlus" id="Q99969"/>
<dbReference type="BioMuta" id="RARRES2"/>
<dbReference type="jPOST" id="Q99969"/>
<dbReference type="MassIVE" id="Q99969"/>
<dbReference type="PaxDb" id="9606-ENSP00000418009"/>
<dbReference type="PeptideAtlas" id="Q99969"/>
<dbReference type="ProteomicsDB" id="78557"/>
<dbReference type="Antibodypedia" id="32863">
    <property type="antibodies" value="356 antibodies from 23 providers"/>
</dbReference>
<dbReference type="DNASU" id="5919"/>
<dbReference type="Ensembl" id="ENST00000223271.8">
    <property type="protein sequence ID" value="ENSP00000223271.3"/>
    <property type="gene ID" value="ENSG00000106538.10"/>
</dbReference>
<dbReference type="Ensembl" id="ENST00000466675.5">
    <property type="protein sequence ID" value="ENSP00000418009.1"/>
    <property type="gene ID" value="ENSG00000106538.10"/>
</dbReference>
<dbReference type="Ensembl" id="ENST00000482669.1">
    <property type="protein sequence ID" value="ENSP00000418483.1"/>
    <property type="gene ID" value="ENSG00000106538.10"/>
</dbReference>
<dbReference type="GeneID" id="5919"/>
<dbReference type="KEGG" id="hsa:5919"/>
<dbReference type="MANE-Select" id="ENST00000223271.8">
    <property type="protein sequence ID" value="ENSP00000223271.3"/>
    <property type="RefSeq nucleotide sequence ID" value="NM_002889.4"/>
    <property type="RefSeq protein sequence ID" value="NP_002880.1"/>
</dbReference>
<dbReference type="UCSC" id="uc003wha.4">
    <property type="organism name" value="human"/>
</dbReference>
<dbReference type="AGR" id="HGNC:9868"/>
<dbReference type="CTD" id="5919"/>
<dbReference type="DisGeNET" id="5919"/>
<dbReference type="GeneCards" id="RARRES2"/>
<dbReference type="HGNC" id="HGNC:9868">
    <property type="gene designation" value="RARRES2"/>
</dbReference>
<dbReference type="HPA" id="ENSG00000106538">
    <property type="expression patterns" value="Tissue enhanced (adrenal gland, choroid plexus, liver)"/>
</dbReference>
<dbReference type="MIM" id="601973">
    <property type="type" value="gene"/>
</dbReference>
<dbReference type="neXtProt" id="NX_Q99969"/>
<dbReference type="OpenTargets" id="ENSG00000106538"/>
<dbReference type="PharmGKB" id="PA34229"/>
<dbReference type="VEuPathDB" id="HostDB:ENSG00000106538"/>
<dbReference type="eggNOG" id="ENOG502SE7C">
    <property type="taxonomic scope" value="Eukaryota"/>
</dbReference>
<dbReference type="GeneTree" id="ENSGT00390000016226"/>
<dbReference type="HOGENOM" id="CLU_138029_0_0_1"/>
<dbReference type="InParanoid" id="Q99969"/>
<dbReference type="OMA" id="QWAFQKT"/>
<dbReference type="OrthoDB" id="9894305at2759"/>
<dbReference type="PAN-GO" id="Q99969">
    <property type="GO annotations" value="6 GO annotations based on evolutionary models"/>
</dbReference>
<dbReference type="PhylomeDB" id="Q99969"/>
<dbReference type="TreeFam" id="TF330938"/>
<dbReference type="PathwayCommons" id="Q99969"/>
<dbReference type="Reactome" id="R-HSA-114608">
    <property type="pathway name" value="Platelet degranulation"/>
</dbReference>
<dbReference type="SignaLink" id="Q99969"/>
<dbReference type="BioGRID-ORCS" id="5919">
    <property type="hits" value="70 hits in 1150 CRISPR screens"/>
</dbReference>
<dbReference type="ChiTaRS" id="RARRES2">
    <property type="organism name" value="human"/>
</dbReference>
<dbReference type="GeneWiki" id="Chemerin"/>
<dbReference type="GenomeRNAi" id="5919"/>
<dbReference type="Pharos" id="Q99969">
    <property type="development level" value="Tbio"/>
</dbReference>
<dbReference type="PRO" id="PR:Q99969"/>
<dbReference type="Proteomes" id="UP000005640">
    <property type="component" value="Chromosome 7"/>
</dbReference>
<dbReference type="RNAct" id="Q99969">
    <property type="molecule type" value="protein"/>
</dbReference>
<dbReference type="Bgee" id="ENSG00000106538">
    <property type="expression patterns" value="Expressed in right adrenal gland cortex and 190 other cell types or tissues"/>
</dbReference>
<dbReference type="ExpressionAtlas" id="Q99969">
    <property type="expression patterns" value="baseline and differential"/>
</dbReference>
<dbReference type="GO" id="GO:0062023">
    <property type="term" value="C:collagen-containing extracellular matrix"/>
    <property type="evidence" value="ECO:0000314"/>
    <property type="project" value="GO_Central"/>
</dbReference>
<dbReference type="GO" id="GO:0031012">
    <property type="term" value="C:extracellular matrix"/>
    <property type="evidence" value="ECO:0000318"/>
    <property type="project" value="GO_Central"/>
</dbReference>
<dbReference type="GO" id="GO:0005576">
    <property type="term" value="C:extracellular region"/>
    <property type="evidence" value="ECO:0000250"/>
    <property type="project" value="UniProtKB"/>
</dbReference>
<dbReference type="GO" id="GO:0005615">
    <property type="term" value="C:extracellular space"/>
    <property type="evidence" value="ECO:0000314"/>
    <property type="project" value="UniProtKB"/>
</dbReference>
<dbReference type="GO" id="GO:0031089">
    <property type="term" value="C:platelet dense granule lumen"/>
    <property type="evidence" value="ECO:0000304"/>
    <property type="project" value="Reactome"/>
</dbReference>
<dbReference type="GO" id="GO:0005102">
    <property type="term" value="F:signaling receptor binding"/>
    <property type="evidence" value="ECO:0000353"/>
    <property type="project" value="UniProtKB"/>
</dbReference>
<dbReference type="GO" id="GO:0019732">
    <property type="term" value="P:antifungal humoral response"/>
    <property type="evidence" value="ECO:0000315"/>
    <property type="project" value="UniProtKB"/>
</dbReference>
<dbReference type="GO" id="GO:0061760">
    <property type="term" value="P:antifungal innate immune response"/>
    <property type="evidence" value="ECO:0000315"/>
    <property type="project" value="UniProtKB"/>
</dbReference>
<dbReference type="GO" id="GO:0030154">
    <property type="term" value="P:cell differentiation"/>
    <property type="evidence" value="ECO:0007669"/>
    <property type="project" value="UniProtKB-KW"/>
</dbReference>
<dbReference type="GO" id="GO:0006935">
    <property type="term" value="P:chemotaxis"/>
    <property type="evidence" value="ECO:0007669"/>
    <property type="project" value="UniProtKB-KW"/>
</dbReference>
<dbReference type="GO" id="GO:0050829">
    <property type="term" value="P:defense response to Gram-negative bacterium"/>
    <property type="evidence" value="ECO:0000315"/>
    <property type="project" value="UniProtKB"/>
</dbReference>
<dbReference type="GO" id="GO:0050830">
    <property type="term" value="P:defense response to Gram-positive bacterium"/>
    <property type="evidence" value="ECO:0000315"/>
    <property type="project" value="UniProtKB"/>
</dbReference>
<dbReference type="GO" id="GO:0048566">
    <property type="term" value="P:embryonic digestive tract development"/>
    <property type="evidence" value="ECO:0000315"/>
    <property type="project" value="DFLAT"/>
</dbReference>
<dbReference type="GO" id="GO:0006954">
    <property type="term" value="P:inflammatory response"/>
    <property type="evidence" value="ECO:0007669"/>
    <property type="project" value="UniProtKB-KW"/>
</dbReference>
<dbReference type="GO" id="GO:0045087">
    <property type="term" value="P:innate immune response"/>
    <property type="evidence" value="ECO:0000315"/>
    <property type="project" value="UniProtKB"/>
</dbReference>
<dbReference type="GO" id="GO:0008286">
    <property type="term" value="P:insulin receptor signaling pathway"/>
    <property type="evidence" value="ECO:0000314"/>
    <property type="project" value="UniProtKB"/>
</dbReference>
<dbReference type="GO" id="GO:0050921">
    <property type="term" value="P:positive regulation of chemotaxis"/>
    <property type="evidence" value="ECO:0000250"/>
    <property type="project" value="UniProtKB"/>
</dbReference>
<dbReference type="GO" id="GO:0045600">
    <property type="term" value="P:positive regulation of fat cell differentiation"/>
    <property type="evidence" value="ECO:0000250"/>
    <property type="project" value="UniProtKB"/>
</dbReference>
<dbReference type="GO" id="GO:0010759">
    <property type="term" value="P:positive regulation of macrophage chemotaxis"/>
    <property type="evidence" value="ECO:0000315"/>
    <property type="project" value="DFLAT"/>
</dbReference>
<dbReference type="GO" id="GO:0001934">
    <property type="term" value="P:positive regulation of protein phosphorylation"/>
    <property type="evidence" value="ECO:0000314"/>
    <property type="project" value="UniProtKB"/>
</dbReference>
<dbReference type="GO" id="GO:0003084">
    <property type="term" value="P:positive regulation of systemic arterial blood pressure"/>
    <property type="evidence" value="ECO:0007669"/>
    <property type="project" value="Ensembl"/>
</dbReference>
<dbReference type="GO" id="GO:0050994">
    <property type="term" value="P:regulation of lipid catabolic process"/>
    <property type="evidence" value="ECO:0000250"/>
    <property type="project" value="UniProtKB"/>
</dbReference>
<dbReference type="GO" id="GO:0014823">
    <property type="term" value="P:response to activity"/>
    <property type="evidence" value="ECO:0007669"/>
    <property type="project" value="Ensembl"/>
</dbReference>
<dbReference type="GO" id="GO:0061771">
    <property type="term" value="P:response to caloric restriction"/>
    <property type="evidence" value="ECO:0007669"/>
    <property type="project" value="Ensembl"/>
</dbReference>
<dbReference type="GO" id="GO:0001523">
    <property type="term" value="P:retinoid metabolic process"/>
    <property type="evidence" value="ECO:0000314"/>
    <property type="project" value="UniProtKB"/>
</dbReference>
<dbReference type="FunFam" id="3.10.450.10:FF:000014">
    <property type="entry name" value="Retinoic acid receptor responder 2"/>
    <property type="match status" value="1"/>
</dbReference>
<dbReference type="Gene3D" id="3.10.450.10">
    <property type="match status" value="1"/>
</dbReference>
<dbReference type="InterPro" id="IPR029562">
    <property type="entry name" value="Chemerin"/>
</dbReference>
<dbReference type="InterPro" id="IPR046350">
    <property type="entry name" value="Cystatin_sf"/>
</dbReference>
<dbReference type="PANTHER" id="PTHR15106">
    <property type="entry name" value="RETINOIC ACID RECEPTOR RESPONDER PROTEIN 2"/>
    <property type="match status" value="1"/>
</dbReference>
<dbReference type="PANTHER" id="PTHR15106:SF2">
    <property type="entry name" value="RETINOIC ACID RECEPTOR RESPONDER PROTEIN 2"/>
    <property type="match status" value="1"/>
</dbReference>
<dbReference type="SUPFAM" id="SSF54403">
    <property type="entry name" value="Cystatin/monellin"/>
    <property type="match status" value="1"/>
</dbReference>
<protein>
    <recommendedName>
        <fullName>Retinoic acid receptor responder protein 2</fullName>
    </recommendedName>
    <alternativeName>
        <fullName>Chemerin</fullName>
    </alternativeName>
    <alternativeName>
        <fullName>RAR-responsive protein TIG2</fullName>
    </alternativeName>
    <alternativeName>
        <fullName>Tazarotene-induced gene 2 protein</fullName>
    </alternativeName>
</protein>
<sequence>MRRLLIPLALWLGAVGVGVAELTEAQRRGLQVALEEFHKHPPVQWAFQETSVESAVDTPFPAGIFVRLEFKLQQTSCRKRDWKKPECKVRPNGRKRKCLACIKLGSEDKVLGRLVHCPIETQVLREAEEHQETQCLRVQRAGEDPHSFYFPGQFAFSKALPRS</sequence>
<proteinExistence type="evidence at protein level"/>
<reference key="1">
    <citation type="journal article" date="1997" name="J. Invest. Dermatol.">
        <title>Tazarotene-induced gene 2 (TIG2), a novel retinoid-responsive gene in skin.</title>
        <authorList>
            <person name="Nagpal S."/>
            <person name="Patel S."/>
            <person name="Jacobe H."/>
            <person name="DiSepio D."/>
            <person name="Ghosn C."/>
            <person name="Malhotra M."/>
            <person name="Teng M."/>
            <person name="Duvic M."/>
            <person name="Chandraratna R.A.S."/>
        </authorList>
    </citation>
    <scope>NUCLEOTIDE SEQUENCE [MRNA]</scope>
    <scope>INDUCTION</scope>
    <source>
        <tissue>Skin</tissue>
    </source>
</reference>
<reference key="2">
    <citation type="journal article" date="1999" name="Gene">
        <title>Selection of cDNAs encoding putative type II membrane proteins on the cell surface from a human full-length cDNA bank.</title>
        <authorList>
            <person name="Yokoyama-Kobayashi M."/>
            <person name="Yamaguchi T."/>
            <person name="Sekine S."/>
            <person name="Kato S."/>
        </authorList>
    </citation>
    <scope>NUCLEOTIDE SEQUENCE [MRNA]</scope>
    <source>
        <tissue>Gastric adenocarcinoma</tissue>
    </source>
</reference>
<reference key="3">
    <citation type="journal article" date="2004" name="Nat. Genet.">
        <title>Complete sequencing and characterization of 21,243 full-length human cDNAs.</title>
        <authorList>
            <person name="Ota T."/>
            <person name="Suzuki Y."/>
            <person name="Nishikawa T."/>
            <person name="Otsuki T."/>
            <person name="Sugiyama T."/>
            <person name="Irie R."/>
            <person name="Wakamatsu A."/>
            <person name="Hayashi K."/>
            <person name="Sato H."/>
            <person name="Nagai K."/>
            <person name="Kimura K."/>
            <person name="Makita H."/>
            <person name="Sekine M."/>
            <person name="Obayashi M."/>
            <person name="Nishi T."/>
            <person name="Shibahara T."/>
            <person name="Tanaka T."/>
            <person name="Ishii S."/>
            <person name="Yamamoto J."/>
            <person name="Saito K."/>
            <person name="Kawai Y."/>
            <person name="Isono Y."/>
            <person name="Nakamura Y."/>
            <person name="Nagahari K."/>
            <person name="Murakami K."/>
            <person name="Yasuda T."/>
            <person name="Iwayanagi T."/>
            <person name="Wagatsuma M."/>
            <person name="Shiratori A."/>
            <person name="Sudo H."/>
            <person name="Hosoiri T."/>
            <person name="Kaku Y."/>
            <person name="Kodaira H."/>
            <person name="Kondo H."/>
            <person name="Sugawara M."/>
            <person name="Takahashi M."/>
            <person name="Kanda K."/>
            <person name="Yokoi T."/>
            <person name="Furuya T."/>
            <person name="Kikkawa E."/>
            <person name="Omura Y."/>
            <person name="Abe K."/>
            <person name="Kamihara K."/>
            <person name="Katsuta N."/>
            <person name="Sato K."/>
            <person name="Tanikawa M."/>
            <person name="Yamazaki M."/>
            <person name="Ninomiya K."/>
            <person name="Ishibashi T."/>
            <person name="Yamashita H."/>
            <person name="Murakawa K."/>
            <person name="Fujimori K."/>
            <person name="Tanai H."/>
            <person name="Kimata M."/>
            <person name="Watanabe M."/>
            <person name="Hiraoka S."/>
            <person name="Chiba Y."/>
            <person name="Ishida S."/>
            <person name="Ono Y."/>
            <person name="Takiguchi S."/>
            <person name="Watanabe S."/>
            <person name="Yosida M."/>
            <person name="Hotuta T."/>
            <person name="Kusano J."/>
            <person name="Kanehori K."/>
            <person name="Takahashi-Fujii A."/>
            <person name="Hara H."/>
            <person name="Tanase T.-O."/>
            <person name="Nomura Y."/>
            <person name="Togiya S."/>
            <person name="Komai F."/>
            <person name="Hara R."/>
            <person name="Takeuchi K."/>
            <person name="Arita M."/>
            <person name="Imose N."/>
            <person name="Musashino K."/>
            <person name="Yuuki H."/>
            <person name="Oshima A."/>
            <person name="Sasaki N."/>
            <person name="Aotsuka S."/>
            <person name="Yoshikawa Y."/>
            <person name="Matsunawa H."/>
            <person name="Ichihara T."/>
            <person name="Shiohata N."/>
            <person name="Sano S."/>
            <person name="Moriya S."/>
            <person name="Momiyama H."/>
            <person name="Satoh N."/>
            <person name="Takami S."/>
            <person name="Terashima Y."/>
            <person name="Suzuki O."/>
            <person name="Nakagawa S."/>
            <person name="Senoh A."/>
            <person name="Mizoguchi H."/>
            <person name="Goto Y."/>
            <person name="Shimizu F."/>
            <person name="Wakebe H."/>
            <person name="Hishigaki H."/>
            <person name="Watanabe T."/>
            <person name="Sugiyama A."/>
            <person name="Takemoto M."/>
            <person name="Kawakami B."/>
            <person name="Yamazaki M."/>
            <person name="Watanabe K."/>
            <person name="Kumagai A."/>
            <person name="Itakura S."/>
            <person name="Fukuzumi Y."/>
            <person name="Fujimori Y."/>
            <person name="Komiyama M."/>
            <person name="Tashiro H."/>
            <person name="Tanigami A."/>
            <person name="Fujiwara T."/>
            <person name="Ono T."/>
            <person name="Yamada K."/>
            <person name="Fujii Y."/>
            <person name="Ozaki K."/>
            <person name="Hirao M."/>
            <person name="Ohmori Y."/>
            <person name="Kawabata A."/>
            <person name="Hikiji T."/>
            <person name="Kobatake N."/>
            <person name="Inagaki H."/>
            <person name="Ikema Y."/>
            <person name="Okamoto S."/>
            <person name="Okitani R."/>
            <person name="Kawakami T."/>
            <person name="Noguchi S."/>
            <person name="Itoh T."/>
            <person name="Shigeta K."/>
            <person name="Senba T."/>
            <person name="Matsumura K."/>
            <person name="Nakajima Y."/>
            <person name="Mizuno T."/>
            <person name="Morinaga M."/>
            <person name="Sasaki M."/>
            <person name="Togashi T."/>
            <person name="Oyama M."/>
            <person name="Hata H."/>
            <person name="Watanabe M."/>
            <person name="Komatsu T."/>
            <person name="Mizushima-Sugano J."/>
            <person name="Satoh T."/>
            <person name="Shirai Y."/>
            <person name="Takahashi Y."/>
            <person name="Nakagawa K."/>
            <person name="Okumura K."/>
            <person name="Nagase T."/>
            <person name="Nomura N."/>
            <person name="Kikuchi H."/>
            <person name="Masuho Y."/>
            <person name="Yamashita R."/>
            <person name="Nakai K."/>
            <person name="Yada T."/>
            <person name="Nakamura Y."/>
            <person name="Ohara O."/>
            <person name="Isogai T."/>
            <person name="Sugano S."/>
        </authorList>
    </citation>
    <scope>NUCLEOTIDE SEQUENCE [LARGE SCALE MRNA]</scope>
    <source>
        <tissue>Prostate</tissue>
    </source>
</reference>
<reference key="4">
    <citation type="submission" date="2004-06" db="EMBL/GenBank/DDBJ databases">
        <title>Cloning of human full open reading frames in Gateway(TM) system entry vector (pDONR201).</title>
        <authorList>
            <person name="Ebert L."/>
            <person name="Schick M."/>
            <person name="Neubert P."/>
            <person name="Schatten R."/>
            <person name="Henze S."/>
            <person name="Korn B."/>
        </authorList>
    </citation>
    <scope>NUCLEOTIDE SEQUENCE [LARGE SCALE MRNA]</scope>
</reference>
<reference key="5">
    <citation type="journal article" date="2003" name="Nature">
        <title>The DNA sequence of human chromosome 7.</title>
        <authorList>
            <person name="Hillier L.W."/>
            <person name="Fulton R.S."/>
            <person name="Fulton L.A."/>
            <person name="Graves T.A."/>
            <person name="Pepin K.H."/>
            <person name="Wagner-McPherson C."/>
            <person name="Layman D."/>
            <person name="Maas J."/>
            <person name="Jaeger S."/>
            <person name="Walker R."/>
            <person name="Wylie K."/>
            <person name="Sekhon M."/>
            <person name="Becker M.C."/>
            <person name="O'Laughlin M.D."/>
            <person name="Schaller M.E."/>
            <person name="Fewell G.A."/>
            <person name="Delehaunty K.D."/>
            <person name="Miner T.L."/>
            <person name="Nash W.E."/>
            <person name="Cordes M."/>
            <person name="Du H."/>
            <person name="Sun H."/>
            <person name="Edwards J."/>
            <person name="Bradshaw-Cordum H."/>
            <person name="Ali J."/>
            <person name="Andrews S."/>
            <person name="Isak A."/>
            <person name="Vanbrunt A."/>
            <person name="Nguyen C."/>
            <person name="Du F."/>
            <person name="Lamar B."/>
            <person name="Courtney L."/>
            <person name="Kalicki J."/>
            <person name="Ozersky P."/>
            <person name="Bielicki L."/>
            <person name="Scott K."/>
            <person name="Holmes A."/>
            <person name="Harkins R."/>
            <person name="Harris A."/>
            <person name="Strong C.M."/>
            <person name="Hou S."/>
            <person name="Tomlinson C."/>
            <person name="Dauphin-Kohlberg S."/>
            <person name="Kozlowicz-Reilly A."/>
            <person name="Leonard S."/>
            <person name="Rohlfing T."/>
            <person name="Rock S.M."/>
            <person name="Tin-Wollam A.-M."/>
            <person name="Abbott A."/>
            <person name="Minx P."/>
            <person name="Maupin R."/>
            <person name="Strowmatt C."/>
            <person name="Latreille P."/>
            <person name="Miller N."/>
            <person name="Johnson D."/>
            <person name="Murray J."/>
            <person name="Woessner J.P."/>
            <person name="Wendl M.C."/>
            <person name="Yang S.-P."/>
            <person name="Schultz B.R."/>
            <person name="Wallis J.W."/>
            <person name="Spieth J."/>
            <person name="Bieri T.A."/>
            <person name="Nelson J.O."/>
            <person name="Berkowicz N."/>
            <person name="Wohldmann P.E."/>
            <person name="Cook L.L."/>
            <person name="Hickenbotham M.T."/>
            <person name="Eldred J."/>
            <person name="Williams D."/>
            <person name="Bedell J.A."/>
            <person name="Mardis E.R."/>
            <person name="Clifton S.W."/>
            <person name="Chissoe S.L."/>
            <person name="Marra M.A."/>
            <person name="Raymond C."/>
            <person name="Haugen E."/>
            <person name="Gillett W."/>
            <person name="Zhou Y."/>
            <person name="James R."/>
            <person name="Phelps K."/>
            <person name="Iadanoto S."/>
            <person name="Bubb K."/>
            <person name="Simms E."/>
            <person name="Levy R."/>
            <person name="Clendenning J."/>
            <person name="Kaul R."/>
            <person name="Kent W.J."/>
            <person name="Furey T.S."/>
            <person name="Baertsch R.A."/>
            <person name="Brent M.R."/>
            <person name="Keibler E."/>
            <person name="Flicek P."/>
            <person name="Bork P."/>
            <person name="Suyama M."/>
            <person name="Bailey J.A."/>
            <person name="Portnoy M.E."/>
            <person name="Torrents D."/>
            <person name="Chinwalla A.T."/>
            <person name="Gish W.R."/>
            <person name="Eddy S.R."/>
            <person name="McPherson J.D."/>
            <person name="Olson M.V."/>
            <person name="Eichler E.E."/>
            <person name="Green E.D."/>
            <person name="Waterston R.H."/>
            <person name="Wilson R.K."/>
        </authorList>
    </citation>
    <scope>NUCLEOTIDE SEQUENCE [LARGE SCALE GENOMIC DNA]</scope>
</reference>
<reference key="6">
    <citation type="submission" date="2005-09" db="EMBL/GenBank/DDBJ databases">
        <authorList>
            <person name="Mural R.J."/>
            <person name="Istrail S."/>
            <person name="Sutton G."/>
            <person name="Florea L."/>
            <person name="Halpern A.L."/>
            <person name="Mobarry C.M."/>
            <person name="Lippert R."/>
            <person name="Walenz B."/>
            <person name="Shatkay H."/>
            <person name="Dew I."/>
            <person name="Miller J.R."/>
            <person name="Flanigan M.J."/>
            <person name="Edwards N.J."/>
            <person name="Bolanos R."/>
            <person name="Fasulo D."/>
            <person name="Halldorsson B.V."/>
            <person name="Hannenhalli S."/>
            <person name="Turner R."/>
            <person name="Yooseph S."/>
            <person name="Lu F."/>
            <person name="Nusskern D.R."/>
            <person name="Shue B.C."/>
            <person name="Zheng X.H."/>
            <person name="Zhong F."/>
            <person name="Delcher A.L."/>
            <person name="Huson D.H."/>
            <person name="Kravitz S.A."/>
            <person name="Mouchard L."/>
            <person name="Reinert K."/>
            <person name="Remington K.A."/>
            <person name="Clark A.G."/>
            <person name="Waterman M.S."/>
            <person name="Eichler E.E."/>
            <person name="Adams M.D."/>
            <person name="Hunkapiller M.W."/>
            <person name="Myers E.W."/>
            <person name="Venter J.C."/>
        </authorList>
    </citation>
    <scope>NUCLEOTIDE SEQUENCE [LARGE SCALE GENOMIC DNA]</scope>
</reference>
<reference key="7">
    <citation type="journal article" date="2004" name="Genome Res.">
        <title>The status, quality, and expansion of the NIH full-length cDNA project: the Mammalian Gene Collection (MGC).</title>
        <authorList>
            <consortium name="The MGC Project Team"/>
        </authorList>
    </citation>
    <scope>NUCLEOTIDE SEQUENCE [LARGE SCALE MRNA]</scope>
    <source>
        <tissue>Kidney</tissue>
    </source>
</reference>
<reference key="8">
    <citation type="journal article" date="2003" name="FEBS Lett.">
        <title>Characterization of human circulating TIG2 as a ligand for the orphan receptor ChemR23.</title>
        <authorList>
            <person name="Meder W."/>
            <person name="Wendland M."/>
            <person name="Busmann A."/>
            <person name="Kutzleb C."/>
            <person name="Spodsberg N."/>
            <person name="John H."/>
            <person name="Richter R."/>
            <person name="Schleuder D."/>
            <person name="Meyer M."/>
            <person name="Forssmann W.G."/>
        </authorList>
    </citation>
    <scope>PROTEIN SEQUENCE OF 21-67</scope>
    <scope>PROTEOLYTIC PROCESSING</scope>
    <scope>FUNCTION AS LIGAND FOR CMKLR1</scope>
</reference>
<reference key="9">
    <citation type="journal article" date="2005" name="J. Biol. Chem.">
        <title>Chemerin activation by serine proteases of the coagulation, fibrinolytic, and inflammatory cascades.</title>
        <authorList>
            <person name="Zabel B.A."/>
            <person name="Allen S.J."/>
            <person name="Kulig P."/>
            <person name="Allen J.A."/>
            <person name="Cichy J."/>
            <person name="Handel T.M."/>
            <person name="Butcher E.C."/>
        </authorList>
    </citation>
    <scope>PROTEOLYTIC PROCESSING</scope>
    <scope>IDENTIFICATION BY MASS SPECTROMETRY</scope>
</reference>
<reference key="10">
    <citation type="journal article" date="2007" name="Biochem. Biophys. Res. Commun.">
        <title>Chemerin--a new adipokine that modulates adipogenesis via its own receptor.</title>
        <authorList>
            <person name="Roh S.G."/>
            <person name="Song S.H."/>
            <person name="Choi K.C."/>
            <person name="Katoh K."/>
            <person name="Wittamer V."/>
            <person name="Parmentier M."/>
            <person name="Sasaki S."/>
        </authorList>
    </citation>
    <scope>FUNCTION</scope>
    <scope>TISSUE SPECIFICITY</scope>
</reference>
<reference key="11">
    <citation type="journal article" date="2007" name="J. Biol. Chem.">
        <title>Chemerin, a novel adipokine that regulates adipogenesis and adipocyte metabolism.</title>
        <authorList>
            <person name="Goralski K.B."/>
            <person name="McCarthy T.C."/>
            <person name="Hanniman E.A."/>
            <person name="Zabel B.A."/>
            <person name="Butcher E.C."/>
            <person name="Parlee S.D."/>
            <person name="Muruganandan S."/>
            <person name="Sinal C.J."/>
        </authorList>
    </citation>
    <scope>FUNCTION</scope>
    <scope>TISSUE SPECIFICITY</scope>
</reference>
<reference key="12">
    <citation type="journal article" date="2008" name="FEBS Lett.">
        <title>Chemerin enhances insulin signaling and potentiates insulin-stimulated glucose uptake in 3T3-L1 adipocytes.</title>
        <authorList>
            <person name="Takahashi M."/>
            <person name="Takahashi Y."/>
            <person name="Takahashi K."/>
            <person name="Zolotaryov F.N."/>
            <person name="Hong K.S."/>
            <person name="Kitazawa R."/>
            <person name="Iida K."/>
            <person name="Okimura Y."/>
            <person name="Kaji H."/>
            <person name="Kitazawa S."/>
            <person name="Kasuga M."/>
            <person name="Chihara K."/>
        </authorList>
    </citation>
    <scope>FUNCTION</scope>
    <scope>SUBCELLULAR LOCATION</scope>
</reference>
<reference key="13">
    <citation type="journal article" date="2009" name="Acta Biochim. Biophys. Sin.">
        <title>Proteolytic regulatory mechanism of chemerin bioactivity.</title>
        <authorList>
            <person name="Du X.Y."/>
            <person name="Leung L.L."/>
        </authorList>
    </citation>
    <scope>REVIEW ON PROTEOLYTIC PROCESSING</scope>
</reference>
<reference key="14">
    <citation type="journal article" date="2010" name="J. Clin. Endocrinol. Metab.">
        <title>Chemerin, a novel adipokine in the regulation of angiogenesis.</title>
        <authorList>
            <person name="Bozaoglu K."/>
            <person name="Curran J.E."/>
            <person name="Stocker C.J."/>
            <person name="Zaibi M.S."/>
            <person name="Segal D."/>
            <person name="Konstantopoulos N."/>
            <person name="Morrison S."/>
            <person name="Carless M."/>
            <person name="Dyer T.D."/>
            <person name="Cole S.A."/>
            <person name="Goring H.H."/>
            <person name="Moses E.K."/>
            <person name="Walder K."/>
            <person name="Cawthorne M.A."/>
            <person name="Blangero J."/>
            <person name="Jowett J.B."/>
        </authorList>
    </citation>
    <scope>FUNCTION</scope>
</reference>
<reference key="15">
    <citation type="journal article" date="2010" name="Trends Endocrinol. Metab.">
        <title>Chemerin: at the crossroads of inflammation and obesity.</title>
        <authorList>
            <person name="Ernst M.C."/>
            <person name="Sinal C.J."/>
        </authorList>
    </citation>
    <scope>REVIEW</scope>
</reference>
<reference key="16">
    <citation type="journal article" date="2011" name="Cytokine Growth Factor Rev.">
        <title>Chemerin and its receptors in leukocyte trafficking, inflammation and metabolism.</title>
        <authorList>
            <person name="Bondue B."/>
            <person name="Wittamer V."/>
            <person name="Parmentier M."/>
        </authorList>
    </citation>
    <scope>REVIEW</scope>
</reference>
<reference key="17">
    <citation type="journal article" date="2012" name="Biochem. Biophys. Res. Commun.">
        <title>A novel adipocytokine, chemerin exerts anti-inflammatory roles in human vascular endothelial cells.</title>
        <authorList>
            <person name="Yamawaki H."/>
            <person name="Kameshima S."/>
            <person name="Usui T."/>
            <person name="Okada M."/>
            <person name="Hara Y."/>
        </authorList>
    </citation>
    <scope>FUNCTION</scope>
</reference>
<reference key="18">
    <citation type="journal article" date="2012" name="Endocrine">
        <title>Chemerin: a potential endocrine link between obesity and type 2 diabetes.</title>
        <authorList>
            <person name="Roman A.A."/>
            <person name="Parlee S.D."/>
            <person name="Sinal C.J."/>
        </authorList>
    </citation>
    <scope>REVIEW</scope>
</reference>
<reference key="19">
    <citation type="journal article" date="2013" name="Obes. Rev.">
        <title>Towards an integrative approach to understanding the role of chemerin in human health and disease.</title>
        <authorList>
            <person name="Rourke J.L."/>
            <person name="Dranse H.J."/>
            <person name="Sinal C.J."/>
        </authorList>
    </citation>
    <scope>REVIEW</scope>
</reference>
<reference key="20">
    <citation type="journal article" date="2013" name="PLoS ONE">
        <title>Chemerin is an antimicrobial agent in human epidermis.</title>
        <authorList>
            <person name="Banas M."/>
            <person name="Zabieglo K."/>
            <person name="Kasetty G."/>
            <person name="Kapinska-Mrowiecka M."/>
            <person name="Borowczyk J."/>
            <person name="Drukala J."/>
            <person name="Murzyn K."/>
            <person name="Zabel B.A."/>
            <person name="Butcher E.C."/>
            <person name="Schroeder J.M."/>
            <person name="Schmidtchen A."/>
            <person name="Cichy J."/>
        </authorList>
    </citation>
    <scope>FUNCTION</scope>
    <scope>TISSUE SPECIFICITY</scope>
</reference>
<reference key="21">
    <citation type="journal article" date="2016" name="PLoS ONE">
        <title>Signaling properties of chemerin receptors CMKLR1, GPR1 and CCRL2.</title>
        <authorList>
            <person name="De Henau O."/>
            <person name="Degroot G.N."/>
            <person name="Imbault V."/>
            <person name="Robert V."/>
            <person name="De Poorter C."/>
            <person name="Mcheik S."/>
            <person name="Gales C."/>
            <person name="Parmentier M."/>
            <person name="Springael J.Y."/>
        </authorList>
    </citation>
    <scope>FUNCTION</scope>
</reference>
<organism>
    <name type="scientific">Homo sapiens</name>
    <name type="common">Human</name>
    <dbReference type="NCBI Taxonomy" id="9606"/>
    <lineage>
        <taxon>Eukaryota</taxon>
        <taxon>Metazoa</taxon>
        <taxon>Chordata</taxon>
        <taxon>Craniata</taxon>
        <taxon>Vertebrata</taxon>
        <taxon>Euteleostomi</taxon>
        <taxon>Mammalia</taxon>
        <taxon>Eutheria</taxon>
        <taxon>Euarchontoglires</taxon>
        <taxon>Primates</taxon>
        <taxon>Haplorrhini</taxon>
        <taxon>Catarrhini</taxon>
        <taxon>Hominidae</taxon>
        <taxon>Homo</taxon>
    </lineage>
</organism>
<comment type="function">
    <text evidence="4 6 7 8 9 10 11 12">Adipocyte-secreted protein (adipokine) that regulates adipogenesis, metabolism and inflammation through activation of the chemokine-like receptor 1 (CMKLR1). Also acts as a ligand for CMKLR2. Can also bind to C-C chemokine receptor-like 2 (CCRL2), but with a lower affinity than it does to CMKLR1 or CMKLR2 (PubMed:27716822). Positively regulates adipocyte differentiation, modulates the expression of adipocyte genes involved in lipid and glucose metabolism and might play a role in angiogenesis, a process essential for the expansion of white adipose tissue. Also acts as a pro-inflammatory adipokine, causing an increase in secretion of pro-inflammatory and prodiabetic adipokines, which further impair adipose tissue metabolic function and have negative systemic effects including impaired insulin sensitivity, altered glucose and lipid metabolism, and a decrease in vascular function in other tissues. Can have both pro- and anti-inflammatory properties depending on the modality of enzymatic cleavage by different classes of proteases. Acts as a chemotactic factor for leukocyte populations expressing CMKLR1, particularly immature plasmacytoid dendritic cells, but also immature myeloid DCs, macrophages and natural killer cells. Exerts an anti-inflammatory role by preventing TNF/TNFA-induced VCAM1 expression and monocytes adhesion in vascular endothelial cells. The effect is mediated via inhibiting activation of NF-kappa-B and CRK/p38 through stimulation of AKT1/NOS3 signaling and nitric oxide production. Its dual role in inflammation and metabolism might provide a link between chronic inflammation and obesity, as well as obesity-related disorders such as type 2 diabetes and cardiovascular disease. Exhibits an antimicrobial function in the skin.</text>
</comment>
<comment type="interaction">
    <interactant intactId="EBI-28951773">
        <id>Q99969</id>
    </interactant>
    <interactant intactId="EBI-21507346">
        <id>P41273</id>
        <label>TNFSF9</label>
    </interactant>
    <organismsDiffer>false</organismsDiffer>
    <experiments>2</experiments>
</comment>
<comment type="subcellular location">
    <subcellularLocation>
        <location evidence="2">Secreted</location>
    </subcellularLocation>
</comment>
<comment type="tissue specificity">
    <text evidence="6 7 11">Expressed at the highest levels in placenta, liver, and white adipose tissue (WAT), and to a lesser extent in many other tissues such as lung, brown adipose tissue, heart, ovary, kidney, skeletal muscle and pancreas. Within WAT, expression is enriched in adipocytes as compared to the stromal vascular fraction. Expression and secretion increases dramatically with adipogenesis. Highly expressed in skin (basal and suprabasal layers of the epidermis, hair follicles and endothelial cells). Expression is elevated in numerous metabolic and inflammatory diseases including psoriasis, obesity, type 2 diabetes, metabolic syndrome and cardiovascular disease.</text>
</comment>
<comment type="induction">
    <text evidence="13">Inhibited in psoriatic lesions. Activated by tazarotene in skin rafts and in the epidermis of psoriatic lesions.</text>
</comment>
<comment type="PTM">
    <text evidence="4 5">Secreted in an inactive precursor form, prochemerin, which is proteolytically processed by a variety of extracellular proteases to generate forms with differing levels of bioactivity. For example, the removal of six amino acids results in chemerin-157, which exhibits the highest activity, while removal of seven amino acids results in chemerin-156 which has slightly less activity. Some proteases are able to cleave at more than one site and chemerin forms may be sequentially processed by different enzymes to modulate activity levels. The coordinated expression and activity of chemerin-modifying enzymes is essential for regulating its bioactivation, inactivation and, consequently, biological function. Cathepsin G cleaves seven C-terminal amino acids from prochemerin (chemerin-156), elastase is able to cleave six (chemerin-157), eight (chemerin-155) or eleven (chemerin-152), plasmin cleaves five amino acids (chemerin-158), and tryptase cleaves five (chemerin-158) or eight (chemerin-155). Multiple cleavages might be required to fully activate chemerin, with an initial tryptase cleavage resulting in chemerin with low activity (chemerin-158), and a second cleavage by carboxypeptidase N or B producing highly active chemerin (chemerin-157).</text>
</comment>
<name>RARR2_HUMAN</name>
<accession>Q99969</accession>
<accession>Q7LE02</accession>